<reference key="1">
    <citation type="journal article" date="2004" name="Proc. Natl. Acad. Sci. U.S.A.">
        <title>The louse-borne human pathogen Bartonella quintana is a genomic derivative of the zoonotic agent Bartonella henselae.</title>
        <authorList>
            <person name="Alsmark U.C.M."/>
            <person name="Frank A.C."/>
            <person name="Karlberg E.O."/>
            <person name="Legault B.-A."/>
            <person name="Ardell D.H."/>
            <person name="Canbaeck B."/>
            <person name="Eriksson A.-S."/>
            <person name="Naeslund A.K."/>
            <person name="Handley S.A."/>
            <person name="Huvet M."/>
            <person name="La Scola B."/>
            <person name="Holmberg M."/>
            <person name="Andersson S.G.E."/>
        </authorList>
    </citation>
    <scope>NUCLEOTIDE SEQUENCE [LARGE SCALE GENOMIC DNA]</scope>
    <source>
        <strain>Toulouse</strain>
    </source>
</reference>
<sequence length="197" mass="22099">MKYSRKKLKNKVYLAIIDLPHGVKGDVLVKVWSAEPQRLKTYGILYDDTGRPYEIVVLRVQKNNAIVHFKGVEDRSAAEALKGIRLYVTRDQLVDDLAEDEFYQVDLIGLRVQDCAGQSLGKVSGFFNFGAGDLLEIRLNTRKTTVLIPFSKAAVPEICVTSGFLVVEPVAAGLLNNKEKNKVENDLDSNEDERMKK</sequence>
<gene>
    <name evidence="1" type="primary">rimM</name>
    <name type="ordered locus">BQ12750</name>
</gene>
<comment type="function">
    <text evidence="1">An accessory protein needed during the final step in the assembly of 30S ribosomal subunit, possibly for assembly of the head region. Essential for efficient processing of 16S rRNA. May be needed both before and after RbfA during the maturation of 16S rRNA. It has affinity for free ribosomal 30S subunits but not for 70S ribosomes.</text>
</comment>
<comment type="subunit">
    <text evidence="1">Binds ribosomal protein uS19.</text>
</comment>
<comment type="subcellular location">
    <subcellularLocation>
        <location evidence="1">Cytoplasm</location>
    </subcellularLocation>
</comment>
<comment type="domain">
    <text evidence="1">The PRC barrel domain binds ribosomal protein uS19.</text>
</comment>
<comment type="similarity">
    <text evidence="1">Belongs to the RimM family.</text>
</comment>
<evidence type="ECO:0000255" key="1">
    <source>
        <dbReference type="HAMAP-Rule" id="MF_00014"/>
    </source>
</evidence>
<name>RIMM_BARQU</name>
<proteinExistence type="inferred from homology"/>
<dbReference type="EMBL" id="BX897700">
    <property type="protein sequence ID" value="CAF26734.1"/>
    <property type="molecule type" value="Genomic_DNA"/>
</dbReference>
<dbReference type="RefSeq" id="WP_011179900.1">
    <property type="nucleotide sequence ID" value="NC_005955.1"/>
</dbReference>
<dbReference type="SMR" id="Q6FYH3"/>
<dbReference type="KEGG" id="bqu:BQ12750"/>
<dbReference type="eggNOG" id="COG0806">
    <property type="taxonomic scope" value="Bacteria"/>
</dbReference>
<dbReference type="HOGENOM" id="CLU_077636_0_1_5"/>
<dbReference type="OrthoDB" id="9788191at2"/>
<dbReference type="Proteomes" id="UP000000597">
    <property type="component" value="Chromosome"/>
</dbReference>
<dbReference type="GO" id="GO:0005737">
    <property type="term" value="C:cytoplasm"/>
    <property type="evidence" value="ECO:0007669"/>
    <property type="project" value="UniProtKB-SubCell"/>
</dbReference>
<dbReference type="GO" id="GO:0005840">
    <property type="term" value="C:ribosome"/>
    <property type="evidence" value="ECO:0007669"/>
    <property type="project" value="InterPro"/>
</dbReference>
<dbReference type="GO" id="GO:0043022">
    <property type="term" value="F:ribosome binding"/>
    <property type="evidence" value="ECO:0007669"/>
    <property type="project" value="InterPro"/>
</dbReference>
<dbReference type="GO" id="GO:0042274">
    <property type="term" value="P:ribosomal small subunit biogenesis"/>
    <property type="evidence" value="ECO:0007669"/>
    <property type="project" value="UniProtKB-UniRule"/>
</dbReference>
<dbReference type="GO" id="GO:0006364">
    <property type="term" value="P:rRNA processing"/>
    <property type="evidence" value="ECO:0007669"/>
    <property type="project" value="UniProtKB-UniRule"/>
</dbReference>
<dbReference type="Gene3D" id="2.30.30.240">
    <property type="entry name" value="PRC-barrel domain"/>
    <property type="match status" value="1"/>
</dbReference>
<dbReference type="Gene3D" id="2.40.30.60">
    <property type="entry name" value="RimM"/>
    <property type="match status" value="1"/>
</dbReference>
<dbReference type="HAMAP" id="MF_00014">
    <property type="entry name" value="Ribosome_mat_RimM"/>
    <property type="match status" value="1"/>
</dbReference>
<dbReference type="InterPro" id="IPR027275">
    <property type="entry name" value="PRC-brl_dom"/>
</dbReference>
<dbReference type="InterPro" id="IPR011033">
    <property type="entry name" value="PRC_barrel-like_sf"/>
</dbReference>
<dbReference type="InterPro" id="IPR011961">
    <property type="entry name" value="RimM"/>
</dbReference>
<dbReference type="InterPro" id="IPR002676">
    <property type="entry name" value="RimM_N"/>
</dbReference>
<dbReference type="InterPro" id="IPR036976">
    <property type="entry name" value="RimM_N_sf"/>
</dbReference>
<dbReference type="InterPro" id="IPR009000">
    <property type="entry name" value="Transl_B-barrel_sf"/>
</dbReference>
<dbReference type="NCBIfam" id="TIGR02273">
    <property type="entry name" value="16S_RimM"/>
    <property type="match status" value="1"/>
</dbReference>
<dbReference type="PANTHER" id="PTHR33692">
    <property type="entry name" value="RIBOSOME MATURATION FACTOR RIMM"/>
    <property type="match status" value="1"/>
</dbReference>
<dbReference type="PANTHER" id="PTHR33692:SF1">
    <property type="entry name" value="RIBOSOME MATURATION FACTOR RIMM"/>
    <property type="match status" value="1"/>
</dbReference>
<dbReference type="Pfam" id="PF05239">
    <property type="entry name" value="PRC"/>
    <property type="match status" value="1"/>
</dbReference>
<dbReference type="Pfam" id="PF01782">
    <property type="entry name" value="RimM"/>
    <property type="match status" value="1"/>
</dbReference>
<dbReference type="SUPFAM" id="SSF50346">
    <property type="entry name" value="PRC-barrel domain"/>
    <property type="match status" value="1"/>
</dbReference>
<dbReference type="SUPFAM" id="SSF50447">
    <property type="entry name" value="Translation proteins"/>
    <property type="match status" value="1"/>
</dbReference>
<keyword id="KW-0143">Chaperone</keyword>
<keyword id="KW-0963">Cytoplasm</keyword>
<keyword id="KW-0690">Ribosome biogenesis</keyword>
<keyword id="KW-0698">rRNA processing</keyword>
<accession>Q6FYH3</accession>
<organism>
    <name type="scientific">Bartonella quintana (strain Toulouse)</name>
    <name type="common">Rochalimaea quintana</name>
    <dbReference type="NCBI Taxonomy" id="283165"/>
    <lineage>
        <taxon>Bacteria</taxon>
        <taxon>Pseudomonadati</taxon>
        <taxon>Pseudomonadota</taxon>
        <taxon>Alphaproteobacteria</taxon>
        <taxon>Hyphomicrobiales</taxon>
        <taxon>Bartonellaceae</taxon>
        <taxon>Bartonella</taxon>
    </lineage>
</organism>
<feature type="chain" id="PRO_0000163255" description="Ribosome maturation factor RimM">
    <location>
        <begin position="1"/>
        <end position="197"/>
    </location>
</feature>
<feature type="domain" description="PRC barrel" evidence="1">
    <location>
        <begin position="99"/>
        <end position="174"/>
    </location>
</feature>
<protein>
    <recommendedName>
        <fullName evidence="1">Ribosome maturation factor RimM</fullName>
    </recommendedName>
</protein>